<name>RPOC1_CARPA</name>
<proteinExistence type="inferred from homology"/>
<feature type="chain" id="PRO_0000353479" description="DNA-directed RNA polymerase subunit beta'">
    <location>
        <begin position="1"/>
        <end position="680"/>
    </location>
</feature>
<feature type="binding site" evidence="1">
    <location>
        <position position="69"/>
    </location>
    <ligand>
        <name>Zn(2+)</name>
        <dbReference type="ChEBI" id="CHEBI:29105"/>
    </ligand>
</feature>
<feature type="binding site" evidence="1">
    <location>
        <position position="71"/>
    </location>
    <ligand>
        <name>Zn(2+)</name>
        <dbReference type="ChEBI" id="CHEBI:29105"/>
    </ligand>
</feature>
<feature type="binding site" evidence="1">
    <location>
        <position position="87"/>
    </location>
    <ligand>
        <name>Zn(2+)</name>
        <dbReference type="ChEBI" id="CHEBI:29105"/>
    </ligand>
</feature>
<feature type="binding site" evidence="1">
    <location>
        <position position="90"/>
    </location>
    <ligand>
        <name>Zn(2+)</name>
        <dbReference type="ChEBI" id="CHEBI:29105"/>
    </ligand>
</feature>
<feature type="binding site" evidence="1">
    <location>
        <position position="489"/>
    </location>
    <ligand>
        <name>Mg(2+)</name>
        <dbReference type="ChEBI" id="CHEBI:18420"/>
    </ligand>
</feature>
<feature type="binding site" evidence="1">
    <location>
        <position position="491"/>
    </location>
    <ligand>
        <name>Mg(2+)</name>
        <dbReference type="ChEBI" id="CHEBI:18420"/>
    </ligand>
</feature>
<feature type="binding site" evidence="1">
    <location>
        <position position="493"/>
    </location>
    <ligand>
        <name>Mg(2+)</name>
        <dbReference type="ChEBI" id="CHEBI:18420"/>
    </ligand>
</feature>
<gene>
    <name evidence="1" type="primary">rpoC1</name>
</gene>
<dbReference type="EC" id="2.7.7.6" evidence="1"/>
<dbReference type="EMBL" id="EU431223">
    <property type="protein sequence ID" value="ABY86773.1"/>
    <property type="molecule type" value="Genomic_DNA"/>
</dbReference>
<dbReference type="RefSeq" id="YP_001671674.1">
    <property type="nucleotide sequence ID" value="NC_010323.1"/>
</dbReference>
<dbReference type="SMR" id="B1A926"/>
<dbReference type="GeneID" id="5878388"/>
<dbReference type="KEGG" id="cpap:5878388"/>
<dbReference type="OrthoDB" id="1047678at2759"/>
<dbReference type="GO" id="GO:0009507">
    <property type="term" value="C:chloroplast"/>
    <property type="evidence" value="ECO:0007669"/>
    <property type="project" value="UniProtKB-SubCell"/>
</dbReference>
<dbReference type="GO" id="GO:0000428">
    <property type="term" value="C:DNA-directed RNA polymerase complex"/>
    <property type="evidence" value="ECO:0007669"/>
    <property type="project" value="UniProtKB-KW"/>
</dbReference>
<dbReference type="GO" id="GO:0005739">
    <property type="term" value="C:mitochondrion"/>
    <property type="evidence" value="ECO:0007669"/>
    <property type="project" value="GOC"/>
</dbReference>
<dbReference type="GO" id="GO:0003677">
    <property type="term" value="F:DNA binding"/>
    <property type="evidence" value="ECO:0007669"/>
    <property type="project" value="UniProtKB-UniRule"/>
</dbReference>
<dbReference type="GO" id="GO:0003899">
    <property type="term" value="F:DNA-directed RNA polymerase activity"/>
    <property type="evidence" value="ECO:0007669"/>
    <property type="project" value="UniProtKB-UniRule"/>
</dbReference>
<dbReference type="GO" id="GO:0000287">
    <property type="term" value="F:magnesium ion binding"/>
    <property type="evidence" value="ECO:0007669"/>
    <property type="project" value="UniProtKB-UniRule"/>
</dbReference>
<dbReference type="GO" id="GO:0008270">
    <property type="term" value="F:zinc ion binding"/>
    <property type="evidence" value="ECO:0007669"/>
    <property type="project" value="UniProtKB-UniRule"/>
</dbReference>
<dbReference type="GO" id="GO:0006351">
    <property type="term" value="P:DNA-templated transcription"/>
    <property type="evidence" value="ECO:0007669"/>
    <property type="project" value="UniProtKB-UniRule"/>
</dbReference>
<dbReference type="FunFam" id="1.10.40.90:FF:000002">
    <property type="entry name" value="DNA-directed RNA polymerase subunit"/>
    <property type="match status" value="1"/>
</dbReference>
<dbReference type="FunFam" id="4.10.860.120:FF:000007">
    <property type="entry name" value="DNA-directed RNA polymerase subunit gamma"/>
    <property type="match status" value="1"/>
</dbReference>
<dbReference type="Gene3D" id="1.10.40.90">
    <property type="match status" value="1"/>
</dbReference>
<dbReference type="Gene3D" id="2.40.40.20">
    <property type="match status" value="1"/>
</dbReference>
<dbReference type="Gene3D" id="4.10.860.120">
    <property type="entry name" value="RNA polymerase II, clamp domain"/>
    <property type="match status" value="1"/>
</dbReference>
<dbReference type="Gene3D" id="1.10.274.100">
    <property type="entry name" value="RNA polymerase Rpb1, domain 3"/>
    <property type="match status" value="1"/>
</dbReference>
<dbReference type="HAMAP" id="MF_01323">
    <property type="entry name" value="RNApol_bact_RpoC1"/>
    <property type="match status" value="1"/>
</dbReference>
<dbReference type="InterPro" id="IPR045867">
    <property type="entry name" value="DNA-dir_RpoC_beta_prime"/>
</dbReference>
<dbReference type="InterPro" id="IPR000722">
    <property type="entry name" value="RNA_pol_asu"/>
</dbReference>
<dbReference type="InterPro" id="IPR006592">
    <property type="entry name" value="RNA_pol_N"/>
</dbReference>
<dbReference type="InterPro" id="IPR007080">
    <property type="entry name" value="RNA_pol_Rpb1_1"/>
</dbReference>
<dbReference type="InterPro" id="IPR042102">
    <property type="entry name" value="RNA_pol_Rpb1_3_sf"/>
</dbReference>
<dbReference type="InterPro" id="IPR044893">
    <property type="entry name" value="RNA_pol_Rpb1_clamp_domain"/>
</dbReference>
<dbReference type="InterPro" id="IPR034678">
    <property type="entry name" value="RNApol_RpoC1"/>
</dbReference>
<dbReference type="PANTHER" id="PTHR19376">
    <property type="entry name" value="DNA-DIRECTED RNA POLYMERASE"/>
    <property type="match status" value="1"/>
</dbReference>
<dbReference type="PANTHER" id="PTHR19376:SF54">
    <property type="entry name" value="DNA-DIRECTED RNA POLYMERASE SUBUNIT BETA"/>
    <property type="match status" value="1"/>
</dbReference>
<dbReference type="Pfam" id="PF04997">
    <property type="entry name" value="RNA_pol_Rpb1_1"/>
    <property type="match status" value="2"/>
</dbReference>
<dbReference type="Pfam" id="PF00623">
    <property type="entry name" value="RNA_pol_Rpb1_2"/>
    <property type="match status" value="2"/>
</dbReference>
<dbReference type="SMART" id="SM00663">
    <property type="entry name" value="RPOLA_N"/>
    <property type="match status" value="1"/>
</dbReference>
<dbReference type="SUPFAM" id="SSF64484">
    <property type="entry name" value="beta and beta-prime subunits of DNA dependent RNA-polymerase"/>
    <property type="match status" value="1"/>
</dbReference>
<accession>B1A926</accession>
<evidence type="ECO:0000255" key="1">
    <source>
        <dbReference type="HAMAP-Rule" id="MF_01323"/>
    </source>
</evidence>
<geneLocation type="chloroplast"/>
<keyword id="KW-0150">Chloroplast</keyword>
<keyword id="KW-0240">DNA-directed RNA polymerase</keyword>
<keyword id="KW-0460">Magnesium</keyword>
<keyword id="KW-0479">Metal-binding</keyword>
<keyword id="KW-0548">Nucleotidyltransferase</keyword>
<keyword id="KW-0934">Plastid</keyword>
<keyword id="KW-0804">Transcription</keyword>
<keyword id="KW-0808">Transferase</keyword>
<keyword id="KW-0862">Zinc</keyword>
<protein>
    <recommendedName>
        <fullName evidence="1">DNA-directed RNA polymerase subunit beta'</fullName>
        <ecNumber evidence="1">2.7.7.6</ecNumber>
    </recommendedName>
    <alternativeName>
        <fullName evidence="1">PEP</fullName>
    </alternativeName>
    <alternativeName>
        <fullName evidence="1">Plastid-encoded RNA polymerase subunit beta'</fullName>
        <shortName evidence="1">RNA polymerase subunit beta'</shortName>
    </alternativeName>
</protein>
<organism>
    <name type="scientific">Carica papaya</name>
    <name type="common">Papaya</name>
    <dbReference type="NCBI Taxonomy" id="3649"/>
    <lineage>
        <taxon>Eukaryota</taxon>
        <taxon>Viridiplantae</taxon>
        <taxon>Streptophyta</taxon>
        <taxon>Embryophyta</taxon>
        <taxon>Tracheophyta</taxon>
        <taxon>Spermatophyta</taxon>
        <taxon>Magnoliopsida</taxon>
        <taxon>eudicotyledons</taxon>
        <taxon>Gunneridae</taxon>
        <taxon>Pentapetalae</taxon>
        <taxon>rosids</taxon>
        <taxon>malvids</taxon>
        <taxon>Brassicales</taxon>
        <taxon>Caricaceae</taxon>
        <taxon>Carica</taxon>
    </lineage>
</organism>
<reference key="1">
    <citation type="journal article" date="2008" name="Nature">
        <title>The draft genome of the transgenic tropical fruit tree papaya (Carica papaya Linnaeus).</title>
        <authorList>
            <person name="Ming R."/>
            <person name="Hou S."/>
            <person name="Feng Y."/>
            <person name="Yu Q."/>
            <person name="Dionne-Laporte A."/>
            <person name="Saw J.H."/>
            <person name="Senin P."/>
            <person name="Wang W."/>
            <person name="Ly B.V."/>
            <person name="Lewis K.L."/>
            <person name="Salzberg S.L."/>
            <person name="Feng L."/>
            <person name="Jones M.R."/>
            <person name="Skelton R.L."/>
            <person name="Murray J.E."/>
            <person name="Chen C."/>
            <person name="Qian W."/>
            <person name="Shen J."/>
            <person name="Du P."/>
            <person name="Eustice M."/>
            <person name="Tong E."/>
            <person name="Tang H."/>
            <person name="Lyons E."/>
            <person name="Paull R.E."/>
            <person name="Michael T.P."/>
            <person name="Wall K."/>
            <person name="Rice D.W."/>
            <person name="Albert H."/>
            <person name="Wang M.L."/>
            <person name="Zhu Y.J."/>
            <person name="Schatz M."/>
            <person name="Nagarajan N."/>
            <person name="Acob R.A."/>
            <person name="Guan P."/>
            <person name="Blas A."/>
            <person name="Wai C.M."/>
            <person name="Ackerman C.M."/>
            <person name="Ren Y."/>
            <person name="Liu C."/>
            <person name="Wang J."/>
            <person name="Wang J."/>
            <person name="Na J.K."/>
            <person name="Shakirov E.V."/>
            <person name="Haas B."/>
            <person name="Thimmapuram J."/>
            <person name="Nelson D."/>
            <person name="Wang X."/>
            <person name="Bowers J.E."/>
            <person name="Gschwend A.R."/>
            <person name="Delcher A.L."/>
            <person name="Singh R."/>
            <person name="Suzuki J.Y."/>
            <person name="Tripathi S."/>
            <person name="Neupane K."/>
            <person name="Wei H."/>
            <person name="Irikura B."/>
            <person name="Paidi M."/>
            <person name="Jiang N."/>
            <person name="Zhang W."/>
            <person name="Presting G."/>
            <person name="Windsor A."/>
            <person name="Navajas-Perez R."/>
            <person name="Torres M.J."/>
            <person name="Feltus F.A."/>
            <person name="Porter B."/>
            <person name="Li Y."/>
            <person name="Burroughs A.M."/>
            <person name="Luo M.C."/>
            <person name="Liu L."/>
            <person name="Christopher D.A."/>
            <person name="Mount S.M."/>
            <person name="Moore P.H."/>
            <person name="Sugimura T."/>
            <person name="Jiang J."/>
            <person name="Schuler M.A."/>
            <person name="Friedman V."/>
            <person name="Mitchell-Olds T."/>
            <person name="Shippen D.E."/>
            <person name="dePamphilis C.W."/>
            <person name="Palmer J.D."/>
            <person name="Freeling M."/>
            <person name="Paterson A.H."/>
            <person name="Gonsalves D."/>
            <person name="Wang L."/>
            <person name="Alam M."/>
        </authorList>
    </citation>
    <scope>NUCLEOTIDE SEQUENCE [LARGE SCALE GENOMIC DNA]</scope>
    <source>
        <strain>cv. SunUp</strain>
    </source>
</reference>
<sequence length="680" mass="78505">MIDRYKHQQLRIGLVSPQQISAWANRILPNGEIVGEVTKPYTFHYKTNKPEKDGLFCERIFGPIKSGICACGNYRVIGDEKEDPKFCEQCGVEFVDSRIRRYQMGYIKLACPVTHVWYLKRLPSYIANLLDKPLKELEGLVYCDFSFARPITKKPTFLRLRGSFEYEIQSWKYSIPLFFTTQGFDTFRNREISTGAGAIREQLADLDLQIIIDYSFLEWKELGEEGPTGNEWEDRKIGRRKDFLVRRMELAKHFIRTNIEPEWMVLCLLPVLPPELRPIIQIDGGKLMSSDINELYRRVIYRNNTLTDLLTTSRSTPGELVMCQEKLVQEAVDTLLDNGIRGQPMRDGHNKVYKSFSDVIEGKEGRFRETLLGKRVDYSGRSVIVVGPSLSLHRCGLPREIAIELFQTFVIRGLIRQHLASNMGVAKSKIREKEPIIWEILQEVMQGHPVLLNRAPTLHRLGIQAFQPILVEGRAICLHPLVRKGFNADFDGDQMAVHVPLSLEAQAEARLLMFSHMNLLSPAIGDPISVPTQDMLMGLYVLTSGTRRGICANRYNPCNRKNYQNERIDDNNYKYTKEPFFCNSYDAIGAYRQKRINLDSPLWLRWQLDQRVIASREAPIEVHYESLGTYHEIYGHYLIVRSVKKEILCIYIRTTVGHISLYREIEEAIQGFCRACSYDT</sequence>
<comment type="function">
    <text evidence="1">DNA-dependent RNA polymerase catalyzes the transcription of DNA into RNA using the four ribonucleoside triphosphates as substrates.</text>
</comment>
<comment type="catalytic activity">
    <reaction evidence="1">
        <text>RNA(n) + a ribonucleoside 5'-triphosphate = RNA(n+1) + diphosphate</text>
        <dbReference type="Rhea" id="RHEA:21248"/>
        <dbReference type="Rhea" id="RHEA-COMP:14527"/>
        <dbReference type="Rhea" id="RHEA-COMP:17342"/>
        <dbReference type="ChEBI" id="CHEBI:33019"/>
        <dbReference type="ChEBI" id="CHEBI:61557"/>
        <dbReference type="ChEBI" id="CHEBI:140395"/>
        <dbReference type="EC" id="2.7.7.6"/>
    </reaction>
</comment>
<comment type="cofactor">
    <cofactor evidence="1">
        <name>Mg(2+)</name>
        <dbReference type="ChEBI" id="CHEBI:18420"/>
    </cofactor>
    <text evidence="1">Binds 1 Mg(2+) ion per subunit.</text>
</comment>
<comment type="cofactor">
    <cofactor evidence="1">
        <name>Zn(2+)</name>
        <dbReference type="ChEBI" id="CHEBI:29105"/>
    </cofactor>
    <text evidence="1">Binds 1 Zn(2+) ion per subunit.</text>
</comment>
<comment type="subunit">
    <text evidence="1">In plastids the minimal PEP RNA polymerase catalytic core is composed of four subunits: alpha, beta, beta', and beta''. When a (nuclear-encoded) sigma factor is associated with the core the holoenzyme is formed, which can initiate transcription.</text>
</comment>
<comment type="subcellular location">
    <subcellularLocation>
        <location evidence="1">Plastid</location>
        <location evidence="1">Chloroplast</location>
    </subcellularLocation>
</comment>
<comment type="similarity">
    <text evidence="1">Belongs to the RNA polymerase beta' chain family. RpoC1 subfamily.</text>
</comment>